<protein>
    <recommendedName>
        <fullName>Amylopullulanase</fullName>
    </recommendedName>
    <alternativeName>
        <fullName>Alpha-amylase/pullulanase</fullName>
    </alternativeName>
    <domain>
        <recommendedName>
            <fullName>Alpha-amylase</fullName>
            <ecNumber>3.2.1.1</ecNumber>
        </recommendedName>
        <alternativeName>
            <fullName>1,4-alpha-D-glucan glucanohydrolase</fullName>
        </alternativeName>
    </domain>
    <domain>
        <recommendedName>
            <fullName>Pullulanase</fullName>
            <ecNumber>3.2.1.41</ecNumber>
        </recommendedName>
        <alternativeName>
            <fullName>1,4-alpha-D-glucan glucanohydrolase</fullName>
        </alternativeName>
        <alternativeName>
            <fullName>Alpha-dextrin endo-1,6-alpha-glucosidase</fullName>
        </alternativeName>
    </domain>
</protein>
<dbReference type="EC" id="3.2.1.1"/>
<dbReference type="EC" id="3.2.1.41"/>
<dbReference type="EMBL" id="L07762">
    <property type="protein sequence ID" value="AAA19800.1"/>
    <property type="status" value="ALT_SEQ"/>
    <property type="molecule type" value="Unassigned_DNA"/>
</dbReference>
<dbReference type="SMR" id="P36905"/>
<dbReference type="CAZy" id="CBM20">
    <property type="family name" value="Carbohydrate-Binding Module Family 20"/>
</dbReference>
<dbReference type="CAZy" id="CBM34">
    <property type="family name" value="Carbohydrate-Binding Module Family 34"/>
</dbReference>
<dbReference type="CAZy" id="GH13">
    <property type="family name" value="Glycoside Hydrolase Family 13"/>
</dbReference>
<dbReference type="GO" id="GO:0004556">
    <property type="term" value="F:alpha-amylase activity"/>
    <property type="evidence" value="ECO:0007669"/>
    <property type="project" value="UniProtKB-EC"/>
</dbReference>
<dbReference type="GO" id="GO:0046872">
    <property type="term" value="F:metal ion binding"/>
    <property type="evidence" value="ECO:0007669"/>
    <property type="project" value="UniProtKB-KW"/>
</dbReference>
<dbReference type="GO" id="GO:0051060">
    <property type="term" value="F:pullulanase activity"/>
    <property type="evidence" value="ECO:0007669"/>
    <property type="project" value="UniProtKB-EC"/>
</dbReference>
<dbReference type="GO" id="GO:0005975">
    <property type="term" value="P:carbohydrate metabolic process"/>
    <property type="evidence" value="ECO:0007669"/>
    <property type="project" value="InterPro"/>
</dbReference>
<dbReference type="CDD" id="cd11338">
    <property type="entry name" value="AmyAc_CMD"/>
    <property type="match status" value="1"/>
</dbReference>
<dbReference type="CDD" id="cd02857">
    <property type="entry name" value="E_set_CDase_PDE_N"/>
    <property type="match status" value="1"/>
</dbReference>
<dbReference type="CDD" id="cd00063">
    <property type="entry name" value="FN3"/>
    <property type="match status" value="2"/>
</dbReference>
<dbReference type="CDD" id="cd12962">
    <property type="entry name" value="X25_BaPul_like"/>
    <property type="match status" value="2"/>
</dbReference>
<dbReference type="Gene3D" id="3.20.20.80">
    <property type="entry name" value="Glycosidases"/>
    <property type="match status" value="1"/>
</dbReference>
<dbReference type="Gene3D" id="2.60.40.1180">
    <property type="entry name" value="Golgi alpha-mannosidase II"/>
    <property type="match status" value="1"/>
</dbReference>
<dbReference type="Gene3D" id="2.60.40.10">
    <property type="entry name" value="Immunoglobulins"/>
    <property type="match status" value="5"/>
</dbReference>
<dbReference type="InterPro" id="IPR031319">
    <property type="entry name" value="A-amylase_C"/>
</dbReference>
<dbReference type="InterPro" id="IPR003961">
    <property type="entry name" value="FN3_dom"/>
</dbReference>
<dbReference type="InterPro" id="IPR036116">
    <property type="entry name" value="FN3_sf"/>
</dbReference>
<dbReference type="InterPro" id="IPR006047">
    <property type="entry name" value="Glyco_hydro_13_cat_dom"/>
</dbReference>
<dbReference type="InterPro" id="IPR004185">
    <property type="entry name" value="Glyco_hydro_13_lg-like_dom"/>
</dbReference>
<dbReference type="InterPro" id="IPR013780">
    <property type="entry name" value="Glyco_hydro_b"/>
</dbReference>
<dbReference type="InterPro" id="IPR017853">
    <property type="entry name" value="Glycoside_hydrolase_SF"/>
</dbReference>
<dbReference type="InterPro" id="IPR013783">
    <property type="entry name" value="Ig-like_fold"/>
</dbReference>
<dbReference type="InterPro" id="IPR014756">
    <property type="entry name" value="Ig_E-set"/>
</dbReference>
<dbReference type="InterPro" id="IPR054409">
    <property type="entry name" value="X25_BaPul-like"/>
</dbReference>
<dbReference type="PANTHER" id="PTHR10357">
    <property type="entry name" value="ALPHA-AMYLASE FAMILY MEMBER"/>
    <property type="match status" value="1"/>
</dbReference>
<dbReference type="PANTHER" id="PTHR10357:SF210">
    <property type="entry name" value="MALTODEXTRIN GLUCOSIDASE"/>
    <property type="match status" value="1"/>
</dbReference>
<dbReference type="Pfam" id="PF00128">
    <property type="entry name" value="Alpha-amylase"/>
    <property type="match status" value="1"/>
</dbReference>
<dbReference type="Pfam" id="PF02903">
    <property type="entry name" value="Alpha-amylase_N"/>
    <property type="match status" value="1"/>
</dbReference>
<dbReference type="Pfam" id="PF22058">
    <property type="entry name" value="X25_BaPul_like"/>
    <property type="match status" value="2"/>
</dbReference>
<dbReference type="SMART" id="SM00642">
    <property type="entry name" value="Aamy"/>
    <property type="match status" value="1"/>
</dbReference>
<dbReference type="SMART" id="SM00632">
    <property type="entry name" value="Aamy_C"/>
    <property type="match status" value="1"/>
</dbReference>
<dbReference type="SMART" id="SM00060">
    <property type="entry name" value="FN3"/>
    <property type="match status" value="2"/>
</dbReference>
<dbReference type="SUPFAM" id="SSF51445">
    <property type="entry name" value="(Trans)glycosidases"/>
    <property type="match status" value="1"/>
</dbReference>
<dbReference type="SUPFAM" id="SSF81296">
    <property type="entry name" value="E set domains"/>
    <property type="match status" value="1"/>
</dbReference>
<dbReference type="SUPFAM" id="SSF49265">
    <property type="entry name" value="Fibronectin type III"/>
    <property type="match status" value="2"/>
</dbReference>
<dbReference type="SUPFAM" id="SSF51011">
    <property type="entry name" value="Glycosyl hydrolase domain"/>
    <property type="match status" value="1"/>
</dbReference>
<dbReference type="PROSITE" id="PS50853">
    <property type="entry name" value="FN3"/>
    <property type="match status" value="2"/>
</dbReference>
<feature type="signal peptide" evidence="4">
    <location>
        <begin position="1"/>
        <end position="35"/>
    </location>
</feature>
<feature type="chain" id="PRO_0000001324" description="Amylopullulanase">
    <location>
        <begin position="36"/>
        <end position="1279"/>
    </location>
</feature>
<feature type="domain" description="Fibronectin type-III 1" evidence="5">
    <location>
        <begin position="930"/>
        <end position="1022"/>
    </location>
</feature>
<feature type="domain" description="Fibronectin type-III 2" evidence="5">
    <location>
        <begin position="1158"/>
        <end position="1252"/>
    </location>
</feature>
<feature type="active site" description="Nucleophile" evidence="3">
    <location>
        <position position="629"/>
    </location>
</feature>
<feature type="active site" description="Proton donor" evidence="3">
    <location>
        <position position="658"/>
    </location>
</feature>
<feature type="binding site" evidence="3">
    <location>
        <position position="248"/>
    </location>
    <ligand>
        <name>Ca(2+)</name>
        <dbReference type="ChEBI" id="CHEBI:29108"/>
        <label>1</label>
    </ligand>
</feature>
<feature type="binding site" evidence="3">
    <location>
        <position position="250"/>
    </location>
    <ligand>
        <name>Ca(2+)</name>
        <dbReference type="ChEBI" id="CHEBI:29108"/>
        <label>1</label>
    </ligand>
</feature>
<feature type="binding site" evidence="3">
    <location>
        <position position="288"/>
    </location>
    <ligand>
        <name>Ca(2+)</name>
        <dbReference type="ChEBI" id="CHEBI:29108"/>
        <label>1</label>
    </ligand>
</feature>
<feature type="binding site" evidence="3">
    <location>
        <position position="343"/>
    </location>
    <ligand>
        <name>Ca(2+)</name>
        <dbReference type="ChEBI" id="CHEBI:29108"/>
        <label>1</label>
    </ligand>
</feature>
<feature type="binding site" evidence="3">
    <location>
        <position position="401"/>
    </location>
    <ligand>
        <name>Ca(2+)</name>
        <dbReference type="ChEBI" id="CHEBI:29108"/>
        <label>2</label>
    </ligand>
</feature>
<feature type="binding site" evidence="3">
    <location>
        <position position="403"/>
    </location>
    <ligand>
        <name>Ca(2+)</name>
        <dbReference type="ChEBI" id="CHEBI:29108"/>
        <label>2</label>
    </ligand>
</feature>
<feature type="binding site" evidence="3">
    <location>
        <position position="406"/>
    </location>
    <ligand>
        <name>Ca(2+)</name>
        <dbReference type="ChEBI" id="CHEBI:29108"/>
        <label>2</label>
    </ligand>
</feature>
<feature type="binding site" evidence="3">
    <location>
        <position position="407"/>
    </location>
    <ligand>
        <name>Ca(2+)</name>
        <dbReference type="ChEBI" id="CHEBI:29108"/>
        <label>2</label>
    </ligand>
</feature>
<feature type="binding site" evidence="3">
    <location>
        <position position="452"/>
    </location>
    <ligand>
        <name>Ca(2+)</name>
        <dbReference type="ChEBI" id="CHEBI:29108"/>
        <label>2</label>
    </ligand>
</feature>
<feature type="binding site" evidence="3">
    <location>
        <position position="454"/>
    </location>
    <ligand>
        <name>Ca(2+)</name>
        <dbReference type="ChEBI" id="CHEBI:29108"/>
        <label>2</label>
    </ligand>
</feature>
<feature type="binding site" evidence="2">
    <location>
        <position position="527"/>
    </location>
    <ligand>
        <name>substrate</name>
    </ligand>
</feature>
<feature type="binding site" evidence="2">
    <location>
        <position position="627"/>
    </location>
    <ligand>
        <name>substrate</name>
    </ligand>
</feature>
<feature type="binding site" evidence="2">
    <location>
        <begin position="734"/>
        <end position="735"/>
    </location>
    <ligand>
        <name>substrate</name>
    </ligand>
</feature>
<feature type="binding site" evidence="2">
    <location>
        <position position="794"/>
    </location>
    <ligand>
        <name>substrate</name>
    </ligand>
</feature>
<feature type="binding site" evidence="2">
    <location>
        <position position="798"/>
    </location>
    <ligand>
        <name>substrate</name>
    </ligand>
</feature>
<feature type="site" description="Transition state stabilizer" evidence="1">
    <location>
        <position position="735"/>
    </location>
</feature>
<gene>
    <name type="primary">apu</name>
</gene>
<evidence type="ECO:0000250" key="1"/>
<evidence type="ECO:0000250" key="2">
    <source>
        <dbReference type="UniProtKB" id="P38940"/>
    </source>
</evidence>
<evidence type="ECO:0000250" key="3">
    <source>
        <dbReference type="UniProtKB" id="Q60053"/>
    </source>
</evidence>
<evidence type="ECO:0000255" key="4"/>
<evidence type="ECO:0000255" key="5">
    <source>
        <dbReference type="PROSITE-ProRule" id="PRU00316"/>
    </source>
</evidence>
<evidence type="ECO:0000305" key="6"/>
<name>APU_THESA</name>
<sequence length="1279" mass="142431">MYKKLFTKKFISFVMSLLLVLTAAFSSMPFHNVYAADNASVVANIVGDFQDQLGDSNWNIDSNITIMQYVGNGLYEFTTPTQLKAGSYQYKVALNHSWNGGGVPSQGNLTLNLTNDSYVTFWFDYNTQSVTDSTKYTPISNDKLPRLVGTIQSAIGAGKDWDPGTSTAIMIDDNFDNVYSYTAHIPKGDYQYKVTLGNTWAENYGANGVQDGSNIQLSVANDADITFFYDANTHNIWTNYSPTLTGLDNNIYYDDLKHDTHDPFFRNPFGAIKVGQTVTLRIQAKNHDLESARISYWDDINKTRTELPMTRIGESPDGNYEYWEIKLSFDHPTRIWYYFILKDGTKTAYYGDNDDQLGGLGKATDTVNKDFELTVYDKNFDTNDWMKGAVMYQIFPDRFYNGDTSNDHAKTLSRGNDPIEFHNDWNDLPDNPNNAGTPGYTGDGIWSNDFFGGDLKGIDDKLDYLKGLGVSVIYLNPIFESPSNHKYDTADYTKIDEMFGTTQDFEKLMSDAHAKGINIILDGVFNHTSDDSIYFNRYGKYPDLGAYQDWKDGNQSLSPYGDWYTINSDGTYECWWGYDSLPVIKSLNGSEYNVTSWANFIINDKNAISKYWLNPDENLNDGADGWRLDVENEVAHDFWTHFRDAINTVKPEAPMIAENWGDASLDLLGDSFNSVMNYQFRNDIIDFLIGQSFDDGNGQHNPIDAAKLDQRLMSIYERYPLPAFYSTMNLLGSHDTMSILTVFGYNSADPNENSDAAKRLAEQKLKLATILQMGYPGMADIYYGDEAGVSGGKDPDDRRTFPWGNEDTALQDFFKNVSSIRNNNQVLKTGDLETLYAQNDVYAIGRRIINGKDAFGNSYPDSAAIVAINRSNSDQQITIDTTKFLRDGVAFKDLINGDKSYTINGGQITINIPAMSGVMLISDDGQDLTAPQVPSNVVATSGNGKVDLSWSQSDGATGYNIYRSSVEGGLYEKIASNVTGTTFEDTNVTNGLKYVYAISAVDELGNESEMSIDTVAYPAYPIGWVGNLTQVVDNHVISVSNPTEDIYAEVWADGLTNSTGQGPNMIAQLGYKYVGGTVNDSVYGSVYNSVYGVDDSDFTWVNAQYVGDIGNNDQYKASLHLINRSMGYLMRFSDNQGQSWTTTDTLSFYVVPSDDLIKPTAPILNQPGVESSRVSLTWSPSTDNVGIYNYEIYRSDGGTFNKIATVSNEVYNYVDTSVINGTTYSYKVVAADPSFNRTESNVVTIKPDVVPIKVTFNVTVPDYTPNSVNLAGTFPNATW</sequence>
<keyword id="KW-0106">Calcium</keyword>
<keyword id="KW-0119">Carbohydrate metabolism</keyword>
<keyword id="KW-0326">Glycosidase</keyword>
<keyword id="KW-0378">Hydrolase</keyword>
<keyword id="KW-0479">Metal-binding</keyword>
<keyword id="KW-0677">Repeat</keyword>
<keyword id="KW-0732">Signal</keyword>
<accession>P36905</accession>
<reference key="1">
    <citation type="journal article" date="1994" name="Appl. Environ. Microbiol.">
        <title>Cloning and sequencing of the Thermoanaerobacterium saccharolyticum B6A-RI apu gene and purification and characterization of the amylopullulanase from Escherichia coli.</title>
        <authorList>
            <person name="Ramesh M.V."/>
            <person name="Podkovyrov S.M."/>
            <person name="Lowe S.E."/>
            <person name="Zeikus J.G."/>
        </authorList>
    </citation>
    <scope>NUCLEOTIDE SEQUENCE [GENOMIC DNA]</scope>
    <source>
        <strain>ATCC 49915 / DSM 7060 / B6A-RI</strain>
    </source>
</reference>
<reference key="2">
    <citation type="unpublished observations" date="1994-11">
        <authorList>
            <person name="Robison K."/>
        </authorList>
    </citation>
    <scope>IDENTIFICATION OF PROBABLE VECTOR CONTAMINATION</scope>
</reference>
<proteinExistence type="inferred from homology"/>
<comment type="catalytic activity">
    <reaction>
        <text>Endohydrolysis of (1-&gt;4)-alpha-D-glucosidic linkages in polysaccharides containing three or more (1-&gt;4)-alpha-linked D-glucose units.</text>
        <dbReference type="EC" id="3.2.1.1"/>
    </reaction>
</comment>
<comment type="catalytic activity">
    <reaction>
        <text>Hydrolysis of (1-&gt;6)-alpha-D-glucosidic linkages in pullulan, amylopectin and glycogen, and in the alpha- and beta-limit dextrins of amylopectin and glycogen.</text>
        <dbReference type="EC" id="3.2.1.41"/>
    </reaction>
</comment>
<comment type="cofactor">
    <cofactor evidence="3">
        <name>Ca(2+)</name>
        <dbReference type="ChEBI" id="CHEBI:29108"/>
    </cofactor>
</comment>
<comment type="similarity">
    <text evidence="6">Belongs to the glycosyl hydrolase 13 family.</text>
</comment>
<comment type="sequence caution" evidence="6">
    <conflict type="miscellaneous discrepancy">
        <sequence resource="EMBL-CDS" id="AAA19800"/>
    </conflict>
    <text>Contaminating sequence. Vector contamination at the C-terminus, a segment of 9 residues, which seems to originate from a puc-type vector.</text>
</comment>
<organism>
    <name type="scientific">Thermoanaerobacterium saccharolyticum</name>
    <dbReference type="NCBI Taxonomy" id="28896"/>
    <lineage>
        <taxon>Bacteria</taxon>
        <taxon>Bacillati</taxon>
        <taxon>Bacillota</taxon>
        <taxon>Clostridia</taxon>
        <taxon>Thermoanaerobacterales</taxon>
        <taxon>Thermoanaerobacteraceae</taxon>
        <taxon>Thermoanaerobacterium</taxon>
    </lineage>
</organism>